<gene>
    <name evidence="1" type="primary">atpH</name>
    <name type="ordered locus">SULAZ_0457</name>
</gene>
<sequence length="182" mass="20615">MKVDKKFLKKVVKGMIKVLGNDEEKLSNTSKALDILSLLYKSNSNFRNIILSPTVSLEEKEKAVSKILDVLNLPQEVKPFIFLAVKENKGNIIKELNKAFRFEVEKFFATVQGEVITAHPIDEDLLNQIKTVLESKIGKKIEFTVKEDKSLIGGAVIKAGSYILDTSVRNYLKQLERSLTRF</sequence>
<evidence type="ECO:0000255" key="1">
    <source>
        <dbReference type="HAMAP-Rule" id="MF_01416"/>
    </source>
</evidence>
<reference key="1">
    <citation type="journal article" date="2009" name="J. Bacteriol.">
        <title>Complete and draft genome sequences of six members of the Aquificales.</title>
        <authorList>
            <person name="Reysenbach A.-L."/>
            <person name="Hamamura N."/>
            <person name="Podar M."/>
            <person name="Griffiths E."/>
            <person name="Ferreira S."/>
            <person name="Hochstein R."/>
            <person name="Heidelberg J."/>
            <person name="Johnson J."/>
            <person name="Mead D."/>
            <person name="Pohorille A."/>
            <person name="Sarmiento M."/>
            <person name="Schweighofer K."/>
            <person name="Seshadri R."/>
            <person name="Voytek M.A."/>
        </authorList>
    </citation>
    <scope>NUCLEOTIDE SEQUENCE [LARGE SCALE GENOMIC DNA]</scope>
    <source>
        <strain>DSM 15241 / OCM 825 / Az-Fu1</strain>
    </source>
</reference>
<feature type="chain" id="PRO_0000382152" description="ATP synthase subunit delta">
    <location>
        <begin position="1"/>
        <end position="182"/>
    </location>
</feature>
<comment type="function">
    <text evidence="1">F(1)F(0) ATP synthase produces ATP from ADP in the presence of a proton or sodium gradient. F-type ATPases consist of two structural domains, F(1) containing the extramembraneous catalytic core and F(0) containing the membrane proton channel, linked together by a central stalk and a peripheral stalk. During catalysis, ATP synthesis in the catalytic domain of F(1) is coupled via a rotary mechanism of the central stalk subunits to proton translocation.</text>
</comment>
<comment type="function">
    <text evidence="1">This protein is part of the stalk that links CF(0) to CF(1). It either transmits conformational changes from CF(0) to CF(1) or is implicated in proton conduction.</text>
</comment>
<comment type="subunit">
    <text evidence="1">F-type ATPases have 2 components, F(1) - the catalytic core - and F(0) - the membrane proton channel. F(1) has five subunits: alpha(3), beta(3), gamma(1), delta(1), epsilon(1). F(0) has three main subunits: a(1), b(2) and c(10-14). The alpha and beta chains form an alternating ring which encloses part of the gamma chain. F(1) is attached to F(0) by a central stalk formed by the gamma and epsilon chains, while a peripheral stalk is formed by the delta and b chains.</text>
</comment>
<comment type="subcellular location">
    <subcellularLocation>
        <location evidence="1">Cell inner membrane</location>
        <topology evidence="1">Peripheral membrane protein</topology>
    </subcellularLocation>
</comment>
<comment type="similarity">
    <text evidence="1">Belongs to the ATPase delta chain family.</text>
</comment>
<dbReference type="EMBL" id="CP001229">
    <property type="protein sequence ID" value="ACN99107.1"/>
    <property type="molecule type" value="Genomic_DNA"/>
</dbReference>
<dbReference type="RefSeq" id="WP_012674426.1">
    <property type="nucleotide sequence ID" value="NC_012438.1"/>
</dbReference>
<dbReference type="SMR" id="C1DTL2"/>
<dbReference type="STRING" id="204536.SULAZ_0457"/>
<dbReference type="KEGG" id="saf:SULAZ_0457"/>
<dbReference type="eggNOG" id="COG0712">
    <property type="taxonomic scope" value="Bacteria"/>
</dbReference>
<dbReference type="HOGENOM" id="CLU_085114_1_1_0"/>
<dbReference type="OrthoDB" id="9802471at2"/>
<dbReference type="Proteomes" id="UP000001369">
    <property type="component" value="Chromosome"/>
</dbReference>
<dbReference type="GO" id="GO:0005886">
    <property type="term" value="C:plasma membrane"/>
    <property type="evidence" value="ECO:0007669"/>
    <property type="project" value="UniProtKB-SubCell"/>
</dbReference>
<dbReference type="GO" id="GO:0045259">
    <property type="term" value="C:proton-transporting ATP synthase complex"/>
    <property type="evidence" value="ECO:0007669"/>
    <property type="project" value="UniProtKB-KW"/>
</dbReference>
<dbReference type="GO" id="GO:0046933">
    <property type="term" value="F:proton-transporting ATP synthase activity, rotational mechanism"/>
    <property type="evidence" value="ECO:0007669"/>
    <property type="project" value="UniProtKB-UniRule"/>
</dbReference>
<dbReference type="Gene3D" id="1.10.520.20">
    <property type="entry name" value="N-terminal domain of the delta subunit of the F1F0-ATP synthase"/>
    <property type="match status" value="1"/>
</dbReference>
<dbReference type="HAMAP" id="MF_01416">
    <property type="entry name" value="ATP_synth_delta_bact"/>
    <property type="match status" value="1"/>
</dbReference>
<dbReference type="InterPro" id="IPR026015">
    <property type="entry name" value="ATP_synth_OSCP/delta_N_sf"/>
</dbReference>
<dbReference type="InterPro" id="IPR000711">
    <property type="entry name" value="ATPase_OSCP/dsu"/>
</dbReference>
<dbReference type="NCBIfam" id="TIGR01145">
    <property type="entry name" value="ATP_synt_delta"/>
    <property type="match status" value="1"/>
</dbReference>
<dbReference type="PANTHER" id="PTHR11910">
    <property type="entry name" value="ATP SYNTHASE DELTA CHAIN"/>
    <property type="match status" value="1"/>
</dbReference>
<dbReference type="Pfam" id="PF00213">
    <property type="entry name" value="OSCP"/>
    <property type="match status" value="1"/>
</dbReference>
<dbReference type="PRINTS" id="PR00125">
    <property type="entry name" value="ATPASEDELTA"/>
</dbReference>
<dbReference type="SUPFAM" id="SSF47928">
    <property type="entry name" value="N-terminal domain of the delta subunit of the F1F0-ATP synthase"/>
    <property type="match status" value="1"/>
</dbReference>
<proteinExistence type="inferred from homology"/>
<name>ATPD_SULAA</name>
<accession>C1DTL2</accession>
<organism>
    <name type="scientific">Sulfurihydrogenibium azorense (strain DSM 15241 / OCM 825 / Az-Fu1)</name>
    <dbReference type="NCBI Taxonomy" id="204536"/>
    <lineage>
        <taxon>Bacteria</taxon>
        <taxon>Pseudomonadati</taxon>
        <taxon>Aquificota</taxon>
        <taxon>Aquificia</taxon>
        <taxon>Aquificales</taxon>
        <taxon>Hydrogenothermaceae</taxon>
        <taxon>Sulfurihydrogenibium</taxon>
    </lineage>
</organism>
<keyword id="KW-0066">ATP synthesis</keyword>
<keyword id="KW-0997">Cell inner membrane</keyword>
<keyword id="KW-1003">Cell membrane</keyword>
<keyword id="KW-0139">CF(1)</keyword>
<keyword id="KW-0375">Hydrogen ion transport</keyword>
<keyword id="KW-0406">Ion transport</keyword>
<keyword id="KW-0472">Membrane</keyword>
<keyword id="KW-1185">Reference proteome</keyword>
<keyword id="KW-0813">Transport</keyword>
<protein>
    <recommendedName>
        <fullName evidence="1">ATP synthase subunit delta</fullName>
    </recommendedName>
    <alternativeName>
        <fullName evidence="1">ATP synthase F(1) sector subunit delta</fullName>
    </alternativeName>
    <alternativeName>
        <fullName evidence="1">F-type ATPase subunit delta</fullName>
        <shortName evidence="1">F-ATPase subunit delta</shortName>
    </alternativeName>
</protein>